<keyword id="KW-0378">Hydrolase</keyword>
<proteinExistence type="inferred from homology"/>
<organism>
    <name type="scientific">Actinobacillus pleuropneumoniae serotype 7 (strain AP76)</name>
    <dbReference type="NCBI Taxonomy" id="537457"/>
    <lineage>
        <taxon>Bacteria</taxon>
        <taxon>Pseudomonadati</taxon>
        <taxon>Pseudomonadota</taxon>
        <taxon>Gammaproteobacteria</taxon>
        <taxon>Pasteurellales</taxon>
        <taxon>Pasteurellaceae</taxon>
        <taxon>Actinobacillus</taxon>
    </lineage>
</organism>
<evidence type="ECO:0000255" key="1">
    <source>
        <dbReference type="HAMAP-Rule" id="MF_00199"/>
    </source>
</evidence>
<protein>
    <recommendedName>
        <fullName evidence="1">Bis(5'-nucleosyl)-tetraphosphatase, symmetrical</fullName>
        <ecNumber evidence="1">3.6.1.41</ecNumber>
    </recommendedName>
    <alternativeName>
        <fullName evidence="1">Ap4A hydrolase</fullName>
    </alternativeName>
    <alternativeName>
        <fullName evidence="1">Diadenosine 5',5'''-P1,P4-tetraphosphate pyrophosphohydrolase</fullName>
    </alternativeName>
    <alternativeName>
        <fullName evidence="1">Diadenosine tetraphosphatase</fullName>
    </alternativeName>
</protein>
<name>APAH_ACTP7</name>
<accession>B3GXJ7</accession>
<comment type="function">
    <text evidence="1">Hydrolyzes diadenosine 5',5'''-P1,P4-tetraphosphate to yield ADP.</text>
</comment>
<comment type="catalytic activity">
    <reaction evidence="1">
        <text>P(1),P(4)-bis(5'-adenosyl) tetraphosphate + H2O = 2 ADP + 2 H(+)</text>
        <dbReference type="Rhea" id="RHEA:24252"/>
        <dbReference type="ChEBI" id="CHEBI:15377"/>
        <dbReference type="ChEBI" id="CHEBI:15378"/>
        <dbReference type="ChEBI" id="CHEBI:58141"/>
        <dbReference type="ChEBI" id="CHEBI:456216"/>
        <dbReference type="EC" id="3.6.1.41"/>
    </reaction>
</comment>
<comment type="similarity">
    <text evidence="1">Belongs to the Ap4A hydrolase family.</text>
</comment>
<gene>
    <name evidence="1" type="primary">apaH</name>
    <name type="ordered locus">APP7_0804</name>
</gene>
<dbReference type="EC" id="3.6.1.41" evidence="1"/>
<dbReference type="EMBL" id="CP001091">
    <property type="protein sequence ID" value="ACE61456.1"/>
    <property type="molecule type" value="Genomic_DNA"/>
</dbReference>
<dbReference type="RefSeq" id="WP_011848461.1">
    <property type="nucleotide sequence ID" value="NC_010939.1"/>
</dbReference>
<dbReference type="SMR" id="B3GXJ7"/>
<dbReference type="GeneID" id="48598942"/>
<dbReference type="KEGG" id="apa:APP7_0804"/>
<dbReference type="PATRIC" id="fig|416269.6.peg.795"/>
<dbReference type="HOGENOM" id="CLU_056184_2_0_6"/>
<dbReference type="Proteomes" id="UP000001226">
    <property type="component" value="Chromosome"/>
</dbReference>
<dbReference type="GO" id="GO:0008803">
    <property type="term" value="F:bis(5'-nucleosyl)-tetraphosphatase (symmetrical) activity"/>
    <property type="evidence" value="ECO:0007669"/>
    <property type="project" value="UniProtKB-UniRule"/>
</dbReference>
<dbReference type="CDD" id="cd07422">
    <property type="entry name" value="MPP_ApaH"/>
    <property type="match status" value="1"/>
</dbReference>
<dbReference type="Gene3D" id="3.60.21.10">
    <property type="match status" value="1"/>
</dbReference>
<dbReference type="HAMAP" id="MF_00199">
    <property type="entry name" value="ApaH"/>
    <property type="match status" value="1"/>
</dbReference>
<dbReference type="InterPro" id="IPR004617">
    <property type="entry name" value="ApaH"/>
</dbReference>
<dbReference type="InterPro" id="IPR004843">
    <property type="entry name" value="Calcineurin-like_PHP_ApaH"/>
</dbReference>
<dbReference type="InterPro" id="IPR029052">
    <property type="entry name" value="Metallo-depent_PP-like"/>
</dbReference>
<dbReference type="NCBIfam" id="TIGR00668">
    <property type="entry name" value="apaH"/>
    <property type="match status" value="1"/>
</dbReference>
<dbReference type="NCBIfam" id="NF001204">
    <property type="entry name" value="PRK00166.1"/>
    <property type="match status" value="1"/>
</dbReference>
<dbReference type="PANTHER" id="PTHR40942">
    <property type="match status" value="1"/>
</dbReference>
<dbReference type="PANTHER" id="PTHR40942:SF4">
    <property type="entry name" value="CYTOCHROME C5"/>
    <property type="match status" value="1"/>
</dbReference>
<dbReference type="Pfam" id="PF00149">
    <property type="entry name" value="Metallophos"/>
    <property type="match status" value="1"/>
</dbReference>
<dbReference type="PIRSF" id="PIRSF000903">
    <property type="entry name" value="B5n-ttraPtase_sm"/>
    <property type="match status" value="1"/>
</dbReference>
<dbReference type="SUPFAM" id="SSF56300">
    <property type="entry name" value="Metallo-dependent phosphatases"/>
    <property type="match status" value="1"/>
</dbReference>
<sequence>MATYIVGDLHGCFDELQLLLKQVNYNPAQDELWLTGDLVARGAKSLECLRFVKDPKNNAKTILGNHDLHLLATLLGVKKVKPNDQVDAIFAAEDRADLQNWLRNQPLLIQHPKYGFLLTHAGISPEWNLTETIACAREAEAVLQSGHYADYIAQMYENTPDHWSAEWQGIERWRYIINVFTRMRFCYADKRLDFACKLPVEDAPNELKPWFKLDNPLFHQQDIIFGHWASLMGKADKPNIYALDTGCAWGNHLTMIRWEDKQIFTQERLK</sequence>
<feature type="chain" id="PRO_1000099313" description="Bis(5'-nucleosyl)-tetraphosphatase, symmetrical">
    <location>
        <begin position="1"/>
        <end position="270"/>
    </location>
</feature>
<reference key="1">
    <citation type="submission" date="2008-06" db="EMBL/GenBank/DDBJ databases">
        <title>Genome and proteome analysis of A. pleuropneumoniae serotype 7.</title>
        <authorList>
            <person name="Linke B."/>
            <person name="Buettner F."/>
            <person name="Martinez-Arias R."/>
            <person name="Goesmann A."/>
            <person name="Baltes N."/>
            <person name="Tegetmeyer H."/>
            <person name="Singh M."/>
            <person name="Gerlach G.F."/>
        </authorList>
    </citation>
    <scope>NUCLEOTIDE SEQUENCE [LARGE SCALE GENOMIC DNA]</scope>
    <source>
        <strain>AP76</strain>
    </source>
</reference>